<sequence>MEHGEISSKAPLVAPVAAGVNRAVAVVDTFLRFIAIIGTIGSAIAMGTTNETLPFFTQFIQFEAKYSDLPSFTFFVAANAVVCTYLVLSIPLSIVHILRPRARYSRLFLVFFDTAMLALLTAGASAAAAIVYLAHKGNVRANWFSICQQFDSFCERISGSLIGSFAAMVLLVVLITLSAFALARRH</sequence>
<accession>F2QA93</accession>
<reference key="1">
    <citation type="journal article" date="2011" name="Plant Physiol.">
        <title>Genetic control of a transition from black to straw-white seed hull in rice domestication.</title>
        <authorList>
            <person name="Zhu B.-F."/>
            <person name="Si L."/>
            <person name="Wang Z."/>
            <person name="Jingjie Zhu Y.Z."/>
            <person name="Shangguan Y."/>
            <person name="Lu D."/>
            <person name="Fan D."/>
            <person name="Li C."/>
            <person name="Lin H."/>
            <person name="Qian Q."/>
            <person name="Sang T."/>
            <person name="Zhou B."/>
            <person name="Minobe Y."/>
            <person name="Han B."/>
        </authorList>
    </citation>
    <scope>NUCLEOTIDE SEQUENCE [GENOMIC DNA]</scope>
    <source>
        <strain>cv. W1943</strain>
    </source>
</reference>
<reference key="2">
    <citation type="journal article" date="2014" name="Plant Physiol.">
        <title>Functional and evolutionary analysis of the CASPARIAN STRIP MEMBRANE DOMAIN PROTEIN family.</title>
        <authorList>
            <person name="Roppolo D."/>
            <person name="Boeckmann B."/>
            <person name="Pfister A."/>
            <person name="Boutet E."/>
            <person name="Rubio M.C."/>
            <person name="Denervaud-Tendon V."/>
            <person name="Vermeer J.E."/>
            <person name="Gheyselinck J."/>
            <person name="Xenarios I."/>
            <person name="Geldner N."/>
        </authorList>
    </citation>
    <scope>GENE FAMILY</scope>
    <scope>NOMENCLATURE</scope>
</reference>
<evidence type="ECO:0000250" key="1"/>
<evidence type="ECO:0000255" key="2"/>
<evidence type="ECO:0000305" key="3"/>
<dbReference type="EMBL" id="FQ377585">
    <property type="protein sequence ID" value="CBW45788.1"/>
    <property type="molecule type" value="Genomic_DNA"/>
</dbReference>
<dbReference type="SMR" id="F2QA93"/>
<dbReference type="STRING" id="4529.F2QA93"/>
<dbReference type="eggNOG" id="ENOG502RRQU">
    <property type="taxonomic scope" value="Eukaryota"/>
</dbReference>
<dbReference type="Proteomes" id="UP000008022">
    <property type="component" value="Unassembled WGS sequence"/>
</dbReference>
<dbReference type="GO" id="GO:0005886">
    <property type="term" value="C:plasma membrane"/>
    <property type="evidence" value="ECO:0007669"/>
    <property type="project" value="UniProtKB-SubCell"/>
</dbReference>
<dbReference type="GO" id="GO:0071555">
    <property type="term" value="P:cell wall organization"/>
    <property type="evidence" value="ECO:0007669"/>
    <property type="project" value="UniProtKB-KW"/>
</dbReference>
<dbReference type="InterPro" id="IPR006459">
    <property type="entry name" value="CASP/CASPL"/>
</dbReference>
<dbReference type="InterPro" id="IPR006702">
    <property type="entry name" value="CASP_dom"/>
</dbReference>
<dbReference type="InterPro" id="IPR044173">
    <property type="entry name" value="CASPL"/>
</dbReference>
<dbReference type="NCBIfam" id="TIGR01569">
    <property type="entry name" value="A_tha_TIGR01569"/>
    <property type="match status" value="1"/>
</dbReference>
<dbReference type="PANTHER" id="PTHR36488:SF12">
    <property type="entry name" value="CASP-LIKE PROTEIN"/>
    <property type="match status" value="1"/>
</dbReference>
<dbReference type="PANTHER" id="PTHR36488">
    <property type="entry name" value="CASP-LIKE PROTEIN 1U1"/>
    <property type="match status" value="1"/>
</dbReference>
<dbReference type="Pfam" id="PF04535">
    <property type="entry name" value="CASP_dom"/>
    <property type="match status" value="1"/>
</dbReference>
<organism>
    <name type="scientific">Oryza rufipogon</name>
    <name type="common">Brownbeard rice</name>
    <name type="synonym">Asian wild rice</name>
    <dbReference type="NCBI Taxonomy" id="4529"/>
    <lineage>
        <taxon>Eukaryota</taxon>
        <taxon>Viridiplantae</taxon>
        <taxon>Streptophyta</taxon>
        <taxon>Embryophyta</taxon>
        <taxon>Tracheophyta</taxon>
        <taxon>Spermatophyta</taxon>
        <taxon>Magnoliopsida</taxon>
        <taxon>Liliopsida</taxon>
        <taxon>Poales</taxon>
        <taxon>Poaceae</taxon>
        <taxon>BOP clade</taxon>
        <taxon>Oryzoideae</taxon>
        <taxon>Oryzeae</taxon>
        <taxon>Oryzinae</taxon>
        <taxon>Oryza</taxon>
    </lineage>
</organism>
<proteinExistence type="inferred from homology"/>
<feature type="chain" id="PRO_0000417788" description="Casparian strip membrane protein 1">
    <location>
        <begin position="1"/>
        <end position="186"/>
    </location>
</feature>
<feature type="topological domain" description="Cytoplasmic" evidence="2">
    <location>
        <begin position="1"/>
        <end position="23"/>
    </location>
</feature>
<feature type="transmembrane region" description="Helical" evidence="2">
    <location>
        <begin position="24"/>
        <end position="44"/>
    </location>
</feature>
<feature type="topological domain" description="Extracellular" evidence="2">
    <location>
        <begin position="45"/>
        <end position="73"/>
    </location>
</feature>
<feature type="transmembrane region" description="Helical" evidence="2">
    <location>
        <begin position="74"/>
        <end position="94"/>
    </location>
</feature>
<feature type="topological domain" description="Cytoplasmic" evidence="2">
    <location>
        <begin position="95"/>
        <end position="106"/>
    </location>
</feature>
<feature type="transmembrane region" description="Helical" evidence="2">
    <location>
        <begin position="107"/>
        <end position="127"/>
    </location>
</feature>
<feature type="topological domain" description="Extracellular" evidence="2">
    <location>
        <begin position="128"/>
        <end position="160"/>
    </location>
</feature>
<feature type="transmembrane region" description="Helical" evidence="2">
    <location>
        <begin position="161"/>
        <end position="181"/>
    </location>
</feature>
<feature type="topological domain" description="Cytoplasmic" evidence="2">
    <location>
        <begin position="182"/>
        <end position="186"/>
    </location>
</feature>
<feature type="glycosylation site" description="N-linked (GlcNAc...) asparagine" evidence="2">
    <location>
        <position position="50"/>
    </location>
</feature>
<gene>
    <name type="ORF">ORW1943Ba0077G13.16</name>
</gene>
<protein>
    <recommendedName>
        <fullName>Casparian strip membrane protein 1</fullName>
        <shortName>OrCASP1</shortName>
    </recommendedName>
</protein>
<comment type="function">
    <text evidence="1">Regulates membrane-cell wall junctions and localized cell wall deposition. Required for establishment of the Casparian strip membrane domain (CSD) and the subsequent formation of Casparian strips, a cell wall modification of the root endodermis that determines an apoplastic barrier between the intraorganismal apoplasm and the extraorganismal apoplasm and prevents lateral diffusion (By similarity).</text>
</comment>
<comment type="subunit">
    <text evidence="1">Homodimer and heterodimers.</text>
</comment>
<comment type="subcellular location">
    <subcellularLocation>
        <location evidence="1">Cell membrane</location>
        <topology evidence="1">Multi-pass membrane protein</topology>
    </subcellularLocation>
    <text evidence="1">Very restricted localization following a belt shape within the plasma membrane which coincides with the position of the Casparian strip membrane domain in the root endodermis.</text>
</comment>
<comment type="similarity">
    <text evidence="3">Belongs to the Casparian strip membrane proteins (CASP) family.</text>
</comment>
<keyword id="KW-1003">Cell membrane</keyword>
<keyword id="KW-0961">Cell wall biogenesis/degradation</keyword>
<keyword id="KW-0325">Glycoprotein</keyword>
<keyword id="KW-0472">Membrane</keyword>
<keyword id="KW-1185">Reference proteome</keyword>
<keyword id="KW-0812">Transmembrane</keyword>
<keyword id="KW-1133">Transmembrane helix</keyword>
<name>CASP1_ORYRU</name>